<feature type="chain" id="PRO_0000352944" description="Threonylcarbamoyl-AMP synthase">
    <location>
        <begin position="1"/>
        <end position="185"/>
    </location>
</feature>
<feature type="domain" description="YrdC-like" evidence="1">
    <location>
        <begin position="1"/>
        <end position="185"/>
    </location>
</feature>
<evidence type="ECO:0000255" key="1">
    <source>
        <dbReference type="HAMAP-Rule" id="MF_01852"/>
    </source>
</evidence>
<evidence type="ECO:0000305" key="2"/>
<keyword id="KW-0067">ATP-binding</keyword>
<keyword id="KW-0963">Cytoplasm</keyword>
<keyword id="KW-0547">Nucleotide-binding</keyword>
<keyword id="KW-0548">Nucleotidyltransferase</keyword>
<keyword id="KW-1185">Reference proteome</keyword>
<keyword id="KW-0808">Transferase</keyword>
<keyword id="KW-0819">tRNA processing</keyword>
<organism>
    <name type="scientific">Photobacterium profundum (strain SS9)</name>
    <dbReference type="NCBI Taxonomy" id="298386"/>
    <lineage>
        <taxon>Bacteria</taxon>
        <taxon>Pseudomonadati</taxon>
        <taxon>Pseudomonadota</taxon>
        <taxon>Gammaproteobacteria</taxon>
        <taxon>Vibrionales</taxon>
        <taxon>Vibrionaceae</taxon>
        <taxon>Photobacterium</taxon>
    </lineage>
</organism>
<sequence length="185" mass="20174">MDNLQQVVSALQSGEVIAYPTEGVFGVGCDPDNPQAVEKLLALKQRPIEKGLILIAANYQQLQPYIDDAQLSDLQKQKIFSTWPGPVTWVMPVKKDISPLLTGKFTSIAVRVSDHPLVQKLCHQFGKPITSTSANLTGLPPCKTVTEVQNQLGEHLSAILEGETGGRENPTEIRDAFSDTVLRQG</sequence>
<gene>
    <name evidence="1" type="primary">tsaC</name>
    <name type="synonym">rimN</name>
    <name type="ordered locus">PBPRA3573</name>
</gene>
<protein>
    <recommendedName>
        <fullName evidence="1">Threonylcarbamoyl-AMP synthase</fullName>
        <shortName evidence="1">TC-AMP synthase</shortName>
        <ecNumber evidence="1">2.7.7.87</ecNumber>
    </recommendedName>
    <alternativeName>
        <fullName evidence="1">L-threonylcarbamoyladenylate synthase</fullName>
    </alternativeName>
    <alternativeName>
        <fullName evidence="1">t(6)A37 threonylcarbamoyladenosine biosynthesis protein TsaC</fullName>
    </alternativeName>
    <alternativeName>
        <fullName evidence="1">tRNA threonylcarbamoyladenosine biosynthesis protein TsaC</fullName>
    </alternativeName>
</protein>
<proteinExistence type="inferred from homology"/>
<name>TSAC_PHOPR</name>
<dbReference type="EC" id="2.7.7.87" evidence="1"/>
<dbReference type="EMBL" id="CR378674">
    <property type="protein sequence ID" value="CAG21829.1"/>
    <property type="status" value="ALT_INIT"/>
    <property type="molecule type" value="Genomic_DNA"/>
</dbReference>
<dbReference type="RefSeq" id="WP_065814475.1">
    <property type="nucleotide sequence ID" value="NC_006370.1"/>
</dbReference>
<dbReference type="SMR" id="Q6LLJ9"/>
<dbReference type="STRING" id="298386.PBPRA3573"/>
<dbReference type="KEGG" id="ppr:PBPRA3573"/>
<dbReference type="eggNOG" id="COG0009">
    <property type="taxonomic scope" value="Bacteria"/>
</dbReference>
<dbReference type="HOGENOM" id="CLU_031397_6_0_6"/>
<dbReference type="Proteomes" id="UP000000593">
    <property type="component" value="Chromosome 1"/>
</dbReference>
<dbReference type="GO" id="GO:0005737">
    <property type="term" value="C:cytoplasm"/>
    <property type="evidence" value="ECO:0007669"/>
    <property type="project" value="UniProtKB-SubCell"/>
</dbReference>
<dbReference type="GO" id="GO:0005524">
    <property type="term" value="F:ATP binding"/>
    <property type="evidence" value="ECO:0007669"/>
    <property type="project" value="UniProtKB-UniRule"/>
</dbReference>
<dbReference type="GO" id="GO:0003725">
    <property type="term" value="F:double-stranded RNA binding"/>
    <property type="evidence" value="ECO:0007669"/>
    <property type="project" value="InterPro"/>
</dbReference>
<dbReference type="GO" id="GO:0061710">
    <property type="term" value="F:L-threonylcarbamoyladenylate synthase"/>
    <property type="evidence" value="ECO:0007669"/>
    <property type="project" value="UniProtKB-EC"/>
</dbReference>
<dbReference type="GO" id="GO:0000049">
    <property type="term" value="F:tRNA binding"/>
    <property type="evidence" value="ECO:0007669"/>
    <property type="project" value="TreeGrafter"/>
</dbReference>
<dbReference type="GO" id="GO:0006450">
    <property type="term" value="P:regulation of translational fidelity"/>
    <property type="evidence" value="ECO:0007669"/>
    <property type="project" value="TreeGrafter"/>
</dbReference>
<dbReference type="GO" id="GO:0002949">
    <property type="term" value="P:tRNA threonylcarbamoyladenosine modification"/>
    <property type="evidence" value="ECO:0007669"/>
    <property type="project" value="UniProtKB-UniRule"/>
</dbReference>
<dbReference type="FunFam" id="3.90.870.10:FF:000004">
    <property type="entry name" value="Threonylcarbamoyl-AMP synthase"/>
    <property type="match status" value="1"/>
</dbReference>
<dbReference type="Gene3D" id="3.90.870.10">
    <property type="entry name" value="DHBP synthase"/>
    <property type="match status" value="1"/>
</dbReference>
<dbReference type="HAMAP" id="MF_01852">
    <property type="entry name" value="TsaC"/>
    <property type="match status" value="1"/>
</dbReference>
<dbReference type="InterPro" id="IPR017945">
    <property type="entry name" value="DHBP_synth_RibB-like_a/b_dom"/>
</dbReference>
<dbReference type="InterPro" id="IPR006070">
    <property type="entry name" value="Sua5-like_dom"/>
</dbReference>
<dbReference type="InterPro" id="IPR023535">
    <property type="entry name" value="TC-AMP_synthase"/>
</dbReference>
<dbReference type="InterPro" id="IPR050156">
    <property type="entry name" value="TC-AMP_synthase_SUA5"/>
</dbReference>
<dbReference type="NCBIfam" id="TIGR00057">
    <property type="entry name" value="L-threonylcarbamoyladenylate synthase"/>
    <property type="match status" value="1"/>
</dbReference>
<dbReference type="PANTHER" id="PTHR17490">
    <property type="entry name" value="SUA5"/>
    <property type="match status" value="1"/>
</dbReference>
<dbReference type="PANTHER" id="PTHR17490:SF18">
    <property type="entry name" value="THREONYLCARBAMOYL-AMP SYNTHASE"/>
    <property type="match status" value="1"/>
</dbReference>
<dbReference type="Pfam" id="PF01300">
    <property type="entry name" value="Sua5_yciO_yrdC"/>
    <property type="match status" value="1"/>
</dbReference>
<dbReference type="SUPFAM" id="SSF55821">
    <property type="entry name" value="YrdC/RibB"/>
    <property type="match status" value="1"/>
</dbReference>
<dbReference type="PROSITE" id="PS51163">
    <property type="entry name" value="YRDC"/>
    <property type="match status" value="1"/>
</dbReference>
<accession>Q6LLJ9</accession>
<reference key="1">
    <citation type="journal article" date="2005" name="Science">
        <title>Life at depth: Photobacterium profundum genome sequence and expression analysis.</title>
        <authorList>
            <person name="Vezzi A."/>
            <person name="Campanaro S."/>
            <person name="D'Angelo M."/>
            <person name="Simonato F."/>
            <person name="Vitulo N."/>
            <person name="Lauro F.M."/>
            <person name="Cestaro A."/>
            <person name="Malacrida G."/>
            <person name="Simionati B."/>
            <person name="Cannata N."/>
            <person name="Romualdi C."/>
            <person name="Bartlett D.H."/>
            <person name="Valle G."/>
        </authorList>
    </citation>
    <scope>NUCLEOTIDE SEQUENCE [LARGE SCALE GENOMIC DNA]</scope>
    <source>
        <strain>ATCC BAA-1253 / SS9</strain>
    </source>
</reference>
<comment type="function">
    <text evidence="1">Required for the formation of a threonylcarbamoyl group on adenosine at position 37 (t(6)A37) in tRNAs that read codons beginning with adenine. Catalyzes the conversion of L-threonine, HCO(3)(-)/CO(2) and ATP to give threonylcarbamoyl-AMP (TC-AMP) as the acyladenylate intermediate, with the release of diphosphate.</text>
</comment>
<comment type="catalytic activity">
    <reaction evidence="1">
        <text>L-threonine + hydrogencarbonate + ATP = L-threonylcarbamoyladenylate + diphosphate + H2O</text>
        <dbReference type="Rhea" id="RHEA:36407"/>
        <dbReference type="ChEBI" id="CHEBI:15377"/>
        <dbReference type="ChEBI" id="CHEBI:17544"/>
        <dbReference type="ChEBI" id="CHEBI:30616"/>
        <dbReference type="ChEBI" id="CHEBI:33019"/>
        <dbReference type="ChEBI" id="CHEBI:57926"/>
        <dbReference type="ChEBI" id="CHEBI:73682"/>
        <dbReference type="EC" id="2.7.7.87"/>
    </reaction>
</comment>
<comment type="subcellular location">
    <subcellularLocation>
        <location evidence="1">Cytoplasm</location>
    </subcellularLocation>
</comment>
<comment type="similarity">
    <text evidence="1">Belongs to the SUA5 family. TsaC subfamily.</text>
</comment>
<comment type="sequence caution" evidence="2">
    <conflict type="erroneous initiation">
        <sequence resource="EMBL-CDS" id="CAG21829"/>
    </conflict>
</comment>